<protein>
    <recommendedName>
        <fullName evidence="1">Phosphatidylglycerol--prolipoprotein diacylglyceryl transferase</fullName>
        <ecNumber evidence="1">2.5.1.145</ecNumber>
    </recommendedName>
</protein>
<comment type="function">
    <text evidence="1">Catalyzes the transfer of the diacylglyceryl group from phosphatidylglycerol to the sulfhydryl group of the N-terminal cysteine of a prolipoprotein, the first step in the formation of mature lipoproteins.</text>
</comment>
<comment type="catalytic activity">
    <reaction evidence="1">
        <text>L-cysteinyl-[prolipoprotein] + a 1,2-diacyl-sn-glycero-3-phospho-(1'-sn-glycerol) = an S-1,2-diacyl-sn-glyceryl-L-cysteinyl-[prolipoprotein] + sn-glycerol 1-phosphate + H(+)</text>
        <dbReference type="Rhea" id="RHEA:56712"/>
        <dbReference type="Rhea" id="RHEA-COMP:14679"/>
        <dbReference type="Rhea" id="RHEA-COMP:14680"/>
        <dbReference type="ChEBI" id="CHEBI:15378"/>
        <dbReference type="ChEBI" id="CHEBI:29950"/>
        <dbReference type="ChEBI" id="CHEBI:57685"/>
        <dbReference type="ChEBI" id="CHEBI:64716"/>
        <dbReference type="ChEBI" id="CHEBI:140658"/>
        <dbReference type="EC" id="2.5.1.145"/>
    </reaction>
</comment>
<comment type="pathway">
    <text evidence="1">Protein modification; lipoprotein biosynthesis (diacylglyceryl transfer).</text>
</comment>
<comment type="subcellular location">
    <subcellularLocation>
        <location evidence="1">Cell membrane</location>
        <topology evidence="1">Multi-pass membrane protein</topology>
    </subcellularLocation>
</comment>
<comment type="similarity">
    <text evidence="1 2">Belongs to the Lgt family.</text>
</comment>
<accession>P72482</accession>
<gene>
    <name evidence="1" type="primary">lgt</name>
    <name type="ordered locus">SMU_755</name>
</gene>
<dbReference type="EC" id="2.5.1.145" evidence="1"/>
<dbReference type="EMBL" id="U75480">
    <property type="protein sequence ID" value="AAC80171.3"/>
    <property type="molecule type" value="Genomic_DNA"/>
</dbReference>
<dbReference type="EMBL" id="AE014133">
    <property type="protein sequence ID" value="AAN58478.1"/>
    <property type="molecule type" value="Genomic_DNA"/>
</dbReference>
<dbReference type="RefSeq" id="NP_721172.1">
    <property type="nucleotide sequence ID" value="NC_004350.2"/>
</dbReference>
<dbReference type="RefSeq" id="WP_002263626.1">
    <property type="nucleotide sequence ID" value="NC_004350.2"/>
</dbReference>
<dbReference type="SMR" id="P72482"/>
<dbReference type="STRING" id="210007.SMU_755"/>
<dbReference type="KEGG" id="smu:SMU_755"/>
<dbReference type="PATRIC" id="fig|210007.7.peg.668"/>
<dbReference type="eggNOG" id="COG0682">
    <property type="taxonomic scope" value="Bacteria"/>
</dbReference>
<dbReference type="HOGENOM" id="CLU_013386_0_1_9"/>
<dbReference type="OrthoDB" id="871140at2"/>
<dbReference type="PhylomeDB" id="P72482"/>
<dbReference type="BRENDA" id="2.5.1.145">
    <property type="organism ID" value="14748"/>
</dbReference>
<dbReference type="UniPathway" id="UPA00664"/>
<dbReference type="Proteomes" id="UP000002512">
    <property type="component" value="Chromosome"/>
</dbReference>
<dbReference type="GO" id="GO:0005886">
    <property type="term" value="C:plasma membrane"/>
    <property type="evidence" value="ECO:0007669"/>
    <property type="project" value="UniProtKB-SubCell"/>
</dbReference>
<dbReference type="GO" id="GO:0008961">
    <property type="term" value="F:phosphatidylglycerol-prolipoprotein diacylglyceryl transferase activity"/>
    <property type="evidence" value="ECO:0007669"/>
    <property type="project" value="UniProtKB-UniRule"/>
</dbReference>
<dbReference type="GO" id="GO:0042158">
    <property type="term" value="P:lipoprotein biosynthetic process"/>
    <property type="evidence" value="ECO:0007669"/>
    <property type="project" value="UniProtKB-UniRule"/>
</dbReference>
<dbReference type="HAMAP" id="MF_01147">
    <property type="entry name" value="Lgt"/>
    <property type="match status" value="1"/>
</dbReference>
<dbReference type="InterPro" id="IPR001640">
    <property type="entry name" value="Lgt"/>
</dbReference>
<dbReference type="NCBIfam" id="TIGR00544">
    <property type="entry name" value="lgt"/>
    <property type="match status" value="1"/>
</dbReference>
<dbReference type="PANTHER" id="PTHR30589:SF0">
    <property type="entry name" value="PHOSPHATIDYLGLYCEROL--PROLIPOPROTEIN DIACYLGLYCERYL TRANSFERASE"/>
    <property type="match status" value="1"/>
</dbReference>
<dbReference type="PANTHER" id="PTHR30589">
    <property type="entry name" value="PROLIPOPROTEIN DIACYLGLYCERYL TRANSFERASE"/>
    <property type="match status" value="1"/>
</dbReference>
<dbReference type="Pfam" id="PF01790">
    <property type="entry name" value="LGT"/>
    <property type="match status" value="1"/>
</dbReference>
<dbReference type="PROSITE" id="PS01311">
    <property type="entry name" value="LGT"/>
    <property type="match status" value="1"/>
</dbReference>
<feature type="chain" id="PRO_0000172687" description="Phosphatidylglycerol--prolipoprotein diacylglyceryl transferase">
    <location>
        <begin position="1"/>
        <end position="259"/>
    </location>
</feature>
<feature type="transmembrane region" description="Helical" evidence="1">
    <location>
        <begin position="9"/>
        <end position="29"/>
    </location>
</feature>
<feature type="transmembrane region" description="Helical" evidence="1">
    <location>
        <begin position="48"/>
        <end position="68"/>
    </location>
</feature>
<feature type="transmembrane region" description="Helical" evidence="1">
    <location>
        <begin position="83"/>
        <end position="103"/>
    </location>
</feature>
<feature type="transmembrane region" description="Helical" evidence="1">
    <location>
        <begin position="114"/>
        <end position="133"/>
    </location>
</feature>
<feature type="transmembrane region" description="Helical" evidence="1">
    <location>
        <begin position="167"/>
        <end position="187"/>
    </location>
</feature>
<feature type="transmembrane region" description="Helical" evidence="1">
    <location>
        <begin position="197"/>
        <end position="217"/>
    </location>
</feature>
<feature type="transmembrane region" description="Helical" evidence="1">
    <location>
        <begin position="227"/>
        <end position="247"/>
    </location>
</feature>
<feature type="binding site" evidence="1">
    <location>
        <position position="131"/>
    </location>
    <ligand>
        <name>a 1,2-diacyl-sn-glycero-3-phospho-(1'-sn-glycerol)</name>
        <dbReference type="ChEBI" id="CHEBI:64716"/>
    </ligand>
</feature>
<feature type="sequence conflict" description="In Ref. 1; AAC80171." evidence="2" ref="1">
    <original>A</original>
    <variation>T</variation>
    <location>
        <position position="13"/>
    </location>
</feature>
<feature type="sequence conflict" description="In Ref. 1; AAC80171." evidence="2" ref="1">
    <original>T</original>
    <variation>A</variation>
    <location>
        <position position="120"/>
    </location>
</feature>
<feature type="sequence conflict" description="In Ref. 1; AAC80171." evidence="2" ref="1">
    <original>A</original>
    <variation>T</variation>
    <location>
        <position position="144"/>
    </location>
</feature>
<evidence type="ECO:0000255" key="1">
    <source>
        <dbReference type="HAMAP-Rule" id="MF_01147"/>
    </source>
</evidence>
<evidence type="ECO:0000305" key="2"/>
<name>LGT_STRMU</name>
<keyword id="KW-1003">Cell membrane</keyword>
<keyword id="KW-0472">Membrane</keyword>
<keyword id="KW-1185">Reference proteome</keyword>
<keyword id="KW-0808">Transferase</keyword>
<keyword id="KW-0812">Transmembrane</keyword>
<keyword id="KW-1133">Transmembrane helix</keyword>
<organism>
    <name type="scientific">Streptococcus mutans serotype c (strain ATCC 700610 / UA159)</name>
    <dbReference type="NCBI Taxonomy" id="210007"/>
    <lineage>
        <taxon>Bacteria</taxon>
        <taxon>Bacillati</taxon>
        <taxon>Bacillota</taxon>
        <taxon>Bacilli</taxon>
        <taxon>Lactobacillales</taxon>
        <taxon>Streptococcaceae</taxon>
        <taxon>Streptococcus</taxon>
    </lineage>
</organism>
<reference key="1">
    <citation type="submission" date="1999-04" db="EMBL/GenBank/DDBJ databases">
        <title>Nucleotide sequence of the Streptococcus mutans ptsK and lgt genes.</title>
        <authorList>
            <person name="Meloni M."/>
            <person name="Piggot P.J."/>
            <person name="Daneo-Moore L."/>
        </authorList>
    </citation>
    <scope>NUCLEOTIDE SEQUENCE [GENOMIC DNA]</scope>
    <source>
        <strain>GS-5 / Kuramitsu</strain>
    </source>
</reference>
<reference key="2">
    <citation type="journal article" date="2002" name="Proc. Natl. Acad. Sci. U.S.A.">
        <title>Genome sequence of Streptococcus mutans UA159, a cariogenic dental pathogen.</title>
        <authorList>
            <person name="Ajdic D.J."/>
            <person name="McShan W.M."/>
            <person name="McLaughlin R.E."/>
            <person name="Savic G."/>
            <person name="Chang J."/>
            <person name="Carson M.B."/>
            <person name="Primeaux C."/>
            <person name="Tian R."/>
            <person name="Kenton S."/>
            <person name="Jia H.G."/>
            <person name="Lin S.P."/>
            <person name="Qian Y."/>
            <person name="Li S."/>
            <person name="Zhu H."/>
            <person name="Najar F.Z."/>
            <person name="Lai H."/>
            <person name="White J."/>
            <person name="Roe B.A."/>
            <person name="Ferretti J.J."/>
        </authorList>
    </citation>
    <scope>NUCLEOTIDE SEQUENCE [LARGE SCALE GENOMIC DNA]</scope>
    <source>
        <strain>ATCC 700610 / UA159</strain>
    </source>
</reference>
<proteinExistence type="inferred from homology"/>
<sequence length="259" mass="29850">MINPIAIKLGPLAIRWYSICIVTGLILAVYLTIREAPKKNIKSDDVLDFILIAFPLAIVGARLYYVIFDWDYYLKNPSEIPVIWHGGIAIYGGLLTGALVLFIFSYYRMIKPIDFLDVATPGVMLAQSIGRWGNFVNQEAYGKAVTQLNYLPDFIRKQMYIDGHYRTPTFLYESLWNLLGFIIIMILRRRPNLLKEGEVAFFYLIWYGSGRFVIEGMRTDSLMFASLRVSQWLSVLLVVVGVILIVIRRRNHAIPYYQC</sequence>